<sequence length="329" mass="38437">MIRNSDYNSFVCCAVCNKIIPPAPFGKTFKRIHEYKPLKTRFYTHKDILDIGANILKKEEKFQEDILRERIAKAEAEVWAQANERQKQAVEKALEEANDRHKIEIQILKEEHQKDLQEVTAKTKTEMYQNMDDEMKREHLAAEQRMVHRIQRIMMECHREKVEAVEKARAEERLIAQKAIQAQKSKATEEIVNTGITVTKDEKTSVARLMREKEHEMNVLYGIAQRQKQEEVQEVLQEAEKTHQATLGNVMDTLANTQGELLSIAKQLGIMTNWKDFLEEELQETRMAFQKYINYTFPKLSPGHADFILPERKKTPSNLVIEENKTTLD</sequence>
<name>CF163_MACFA</name>
<protein>
    <recommendedName>
        <fullName>Uncharacterized protein C6orf163 homolog</fullName>
    </recommendedName>
</protein>
<organism>
    <name type="scientific">Macaca fascicularis</name>
    <name type="common">Crab-eating macaque</name>
    <name type="synonym">Cynomolgus monkey</name>
    <dbReference type="NCBI Taxonomy" id="9541"/>
    <lineage>
        <taxon>Eukaryota</taxon>
        <taxon>Metazoa</taxon>
        <taxon>Chordata</taxon>
        <taxon>Craniata</taxon>
        <taxon>Vertebrata</taxon>
        <taxon>Euteleostomi</taxon>
        <taxon>Mammalia</taxon>
        <taxon>Eutheria</taxon>
        <taxon>Euarchontoglires</taxon>
        <taxon>Primates</taxon>
        <taxon>Haplorrhini</taxon>
        <taxon>Catarrhini</taxon>
        <taxon>Cercopithecidae</taxon>
        <taxon>Cercopithecinae</taxon>
        <taxon>Macaca</taxon>
    </lineage>
</organism>
<accession>Q95JY7</accession>
<gene>
    <name type="ORF">QtsA-12155</name>
</gene>
<dbReference type="EMBL" id="AB070040">
    <property type="protein sequence ID" value="BAB62985.1"/>
    <property type="molecule type" value="mRNA"/>
</dbReference>
<dbReference type="RefSeq" id="NP_001271101.1">
    <property type="nucleotide sequence ID" value="NM_001284172.1"/>
</dbReference>
<dbReference type="RefSeq" id="XP_015304322.1">
    <property type="nucleotide sequence ID" value="XM_015448836.1"/>
</dbReference>
<dbReference type="SMR" id="Q95JY7"/>
<dbReference type="Ensembl" id="ENSMFAT00000002713.2">
    <property type="protein sequence ID" value="ENSMFAP00000028523.1"/>
    <property type="gene ID" value="ENSMFAG00000045620.2"/>
</dbReference>
<dbReference type="KEGG" id="mcf:102134928"/>
<dbReference type="CTD" id="100915612"/>
<dbReference type="VEuPathDB" id="HostDB:ENSMFAG00000045620"/>
<dbReference type="eggNOG" id="ENOG502RDFA">
    <property type="taxonomic scope" value="Eukaryota"/>
</dbReference>
<dbReference type="GeneTree" id="ENSGT00390000010837"/>
<dbReference type="Proteomes" id="UP000233100">
    <property type="component" value="Chromosome 4"/>
</dbReference>
<dbReference type="Bgee" id="ENSMFAG00000045620">
    <property type="expression patterns" value="Expressed in multicellular organism"/>
</dbReference>
<dbReference type="InterPro" id="IPR038927">
    <property type="entry name" value="C6orf163"/>
</dbReference>
<dbReference type="PANTHER" id="PTHR34645:SF1">
    <property type="entry name" value="GENE 136-RELATED"/>
    <property type="match status" value="1"/>
</dbReference>
<dbReference type="PANTHER" id="PTHR34645">
    <property type="entry name" value="SIMILAR TO HYPOTHETICAL PROTEIN"/>
    <property type="match status" value="1"/>
</dbReference>
<evidence type="ECO:0000255" key="1"/>
<reference key="1">
    <citation type="journal article" date="2002" name="BMC Genomics">
        <title>Cynomolgus monkey testicular cDNAs for discovery of novel human genes in the human genome sequence.</title>
        <authorList>
            <person name="Osada N."/>
            <person name="Hida M."/>
            <person name="Kusuda J."/>
            <person name="Tanuma R."/>
            <person name="Hirata M."/>
            <person name="Suto Y."/>
            <person name="Hirai M."/>
            <person name="Terao K."/>
            <person name="Sugano S."/>
            <person name="Hashimoto K."/>
        </authorList>
    </citation>
    <scope>NUCLEOTIDE SEQUENCE [LARGE SCALE MRNA]</scope>
    <source>
        <tissue>Testis</tissue>
    </source>
</reference>
<feature type="chain" id="PRO_0000271362" description="Uncharacterized protein C6orf163 homolog">
    <location>
        <begin position="1"/>
        <end position="329"/>
    </location>
</feature>
<feature type="coiled-coil region" evidence="1">
    <location>
        <begin position="57"/>
        <end position="119"/>
    </location>
</feature>
<feature type="coiled-coil region" evidence="1">
    <location>
        <begin position="224"/>
        <end position="250"/>
    </location>
</feature>
<proteinExistence type="evidence at transcript level"/>
<keyword id="KW-0175">Coiled coil</keyword>
<keyword id="KW-1185">Reference proteome</keyword>